<proteinExistence type="inferred from homology"/>
<comment type="similarity">
    <text evidence="1">Belongs to the UPF0597 family.</text>
</comment>
<organism>
    <name type="scientific">Desulforapulum autotrophicum (strain ATCC 43914 / DSM 3382 / VKM B-1955 / HRM2)</name>
    <name type="common">Desulfobacterium autotrophicum</name>
    <dbReference type="NCBI Taxonomy" id="177437"/>
    <lineage>
        <taxon>Bacteria</taxon>
        <taxon>Pseudomonadati</taxon>
        <taxon>Thermodesulfobacteriota</taxon>
        <taxon>Desulfobacteria</taxon>
        <taxon>Desulfobacterales</taxon>
        <taxon>Desulfobacteraceae</taxon>
        <taxon>Desulforapulum</taxon>
    </lineage>
</organism>
<keyword id="KW-1185">Reference proteome</keyword>
<dbReference type="EMBL" id="CP001087">
    <property type="protein sequence ID" value="ACN13404.1"/>
    <property type="molecule type" value="Genomic_DNA"/>
</dbReference>
<dbReference type="RefSeq" id="WP_012662653.1">
    <property type="nucleotide sequence ID" value="NC_012108.1"/>
</dbReference>
<dbReference type="SMR" id="C0QFK8"/>
<dbReference type="STRING" id="177437.HRM2_02820"/>
<dbReference type="KEGG" id="dat:HRM2_02820"/>
<dbReference type="eggNOG" id="COG3681">
    <property type="taxonomic scope" value="Bacteria"/>
</dbReference>
<dbReference type="HOGENOM" id="CLU_051840_0_0_7"/>
<dbReference type="OrthoDB" id="41906at2"/>
<dbReference type="Proteomes" id="UP000000442">
    <property type="component" value="Chromosome"/>
</dbReference>
<dbReference type="GO" id="GO:0080146">
    <property type="term" value="F:L-cysteine desulfhydrase activity"/>
    <property type="evidence" value="ECO:0007669"/>
    <property type="project" value="TreeGrafter"/>
</dbReference>
<dbReference type="GO" id="GO:0019450">
    <property type="term" value="P:L-cysteine catabolic process to pyruvate"/>
    <property type="evidence" value="ECO:0007669"/>
    <property type="project" value="TreeGrafter"/>
</dbReference>
<dbReference type="HAMAP" id="MF_01845">
    <property type="entry name" value="UPF0597"/>
    <property type="match status" value="1"/>
</dbReference>
<dbReference type="InterPro" id="IPR005130">
    <property type="entry name" value="Ser_deHydtase-like_asu"/>
</dbReference>
<dbReference type="InterPro" id="IPR021144">
    <property type="entry name" value="UPF0597"/>
</dbReference>
<dbReference type="PANTHER" id="PTHR30501">
    <property type="entry name" value="UPF0597 PROTEIN YHAM"/>
    <property type="match status" value="1"/>
</dbReference>
<dbReference type="PANTHER" id="PTHR30501:SF2">
    <property type="entry name" value="UPF0597 PROTEIN YHAM"/>
    <property type="match status" value="1"/>
</dbReference>
<dbReference type="Pfam" id="PF03313">
    <property type="entry name" value="SDH_alpha"/>
    <property type="match status" value="1"/>
</dbReference>
<dbReference type="PIRSF" id="PIRSF006054">
    <property type="entry name" value="UCP006054"/>
    <property type="match status" value="1"/>
</dbReference>
<evidence type="ECO:0000255" key="1">
    <source>
        <dbReference type="HAMAP-Rule" id="MF_01845"/>
    </source>
</evidence>
<gene>
    <name type="ordered locus">HRM2_02820</name>
</gene>
<name>Y282_DESAH</name>
<sequence length="442" mass="46006">MNYTIKDILKLEVAPALGCTEPTAIALGAAAAATLLFPGKAIETIEVWLDPNLFKNGLAVSIPRTHGRSGLDLAAALGALAGDAHLKMEVLTPITDKDVDAALALVAGKQVKVRLLDRHRGLLVRTRIKAGDQIAESVIEQLHDNITSLCLNGEQIETTDLFPRSLEGGKNQTSALELWLRGITMETMIAMIDDLDGSDLEFLQTGIDMNMALARHGLENAVGLGVGTTLEALAQKGLVARDMIHRARVLTAAAADARMSGAPLPAMSSAGSGNHGLTAILPVKAVADHLKSDRKDLCRAVGLSHVVTAFVKAHTGRLAAICACSVAAGAGATAAITWLLGGTPGQIGGAVENIIEDLAGVICDGAKNSCALKLDTAAARAVQAALFAMNGLTVKVTDGIVGGSAEETIRNMGILSSQGMIETDKTILKIMMDKLINSRSEQ</sequence>
<accession>C0QFK8</accession>
<protein>
    <recommendedName>
        <fullName evidence="1">UPF0597 protein HRM2_02820</fullName>
    </recommendedName>
</protein>
<reference key="1">
    <citation type="journal article" date="2009" name="Environ. Microbiol.">
        <title>Genome sequence of Desulfobacterium autotrophicum HRM2, a marine sulfate reducer oxidizing organic carbon completely to carbon dioxide.</title>
        <authorList>
            <person name="Strittmatter A.W."/>
            <person name="Liesegang H."/>
            <person name="Rabus R."/>
            <person name="Decker I."/>
            <person name="Amann J."/>
            <person name="Andres S."/>
            <person name="Henne A."/>
            <person name="Fricke W.F."/>
            <person name="Martinez-Arias R."/>
            <person name="Bartels D."/>
            <person name="Goesmann A."/>
            <person name="Krause L."/>
            <person name="Puehler A."/>
            <person name="Klenk H.P."/>
            <person name="Richter M."/>
            <person name="Schuler M."/>
            <person name="Gloeckner F.O."/>
            <person name="Meyerdierks A."/>
            <person name="Gottschalk G."/>
            <person name="Amann R."/>
        </authorList>
    </citation>
    <scope>NUCLEOTIDE SEQUENCE [LARGE SCALE GENOMIC DNA]</scope>
    <source>
        <strain>ATCC 43914 / DSM 3382 / VKM B-1955 / HRM2</strain>
    </source>
</reference>
<feature type="chain" id="PRO_1000216105" description="UPF0597 protein HRM2_02820">
    <location>
        <begin position="1"/>
        <end position="442"/>
    </location>
</feature>